<dbReference type="EC" id="6.3.2.1" evidence="1"/>
<dbReference type="EMBL" id="CP001164">
    <property type="protein sequence ID" value="ACI37358.1"/>
    <property type="molecule type" value="Genomic_DNA"/>
</dbReference>
<dbReference type="RefSeq" id="WP_000905372.1">
    <property type="nucleotide sequence ID" value="NC_011353.1"/>
</dbReference>
<dbReference type="SMR" id="B5YZH0"/>
<dbReference type="GeneID" id="75170033"/>
<dbReference type="KEGG" id="ecf:ECH74115_0142"/>
<dbReference type="HOGENOM" id="CLU_047148_0_0_6"/>
<dbReference type="UniPathway" id="UPA00028">
    <property type="reaction ID" value="UER00005"/>
</dbReference>
<dbReference type="GO" id="GO:0005829">
    <property type="term" value="C:cytosol"/>
    <property type="evidence" value="ECO:0007669"/>
    <property type="project" value="TreeGrafter"/>
</dbReference>
<dbReference type="GO" id="GO:0005524">
    <property type="term" value="F:ATP binding"/>
    <property type="evidence" value="ECO:0007669"/>
    <property type="project" value="UniProtKB-KW"/>
</dbReference>
<dbReference type="GO" id="GO:0004592">
    <property type="term" value="F:pantoate-beta-alanine ligase activity"/>
    <property type="evidence" value="ECO:0007669"/>
    <property type="project" value="UniProtKB-UniRule"/>
</dbReference>
<dbReference type="GO" id="GO:0015940">
    <property type="term" value="P:pantothenate biosynthetic process"/>
    <property type="evidence" value="ECO:0007669"/>
    <property type="project" value="UniProtKB-UniRule"/>
</dbReference>
<dbReference type="CDD" id="cd00560">
    <property type="entry name" value="PanC"/>
    <property type="match status" value="1"/>
</dbReference>
<dbReference type="FunFam" id="3.30.1300.10:FF:000001">
    <property type="entry name" value="Pantothenate synthetase"/>
    <property type="match status" value="1"/>
</dbReference>
<dbReference type="FunFam" id="3.40.50.620:FF:000013">
    <property type="entry name" value="Pantothenate synthetase"/>
    <property type="match status" value="1"/>
</dbReference>
<dbReference type="Gene3D" id="3.40.50.620">
    <property type="entry name" value="HUPs"/>
    <property type="match status" value="1"/>
</dbReference>
<dbReference type="Gene3D" id="3.30.1300.10">
    <property type="entry name" value="Pantoate-beta-alanine ligase, C-terminal domain"/>
    <property type="match status" value="1"/>
</dbReference>
<dbReference type="HAMAP" id="MF_00158">
    <property type="entry name" value="PanC"/>
    <property type="match status" value="1"/>
</dbReference>
<dbReference type="InterPro" id="IPR004821">
    <property type="entry name" value="Cyt_trans-like"/>
</dbReference>
<dbReference type="InterPro" id="IPR003721">
    <property type="entry name" value="Pantoate_ligase"/>
</dbReference>
<dbReference type="InterPro" id="IPR042176">
    <property type="entry name" value="Pantoate_ligase_C"/>
</dbReference>
<dbReference type="InterPro" id="IPR014729">
    <property type="entry name" value="Rossmann-like_a/b/a_fold"/>
</dbReference>
<dbReference type="NCBIfam" id="TIGR00125">
    <property type="entry name" value="cyt_tran_rel"/>
    <property type="match status" value="1"/>
</dbReference>
<dbReference type="NCBIfam" id="TIGR00018">
    <property type="entry name" value="panC"/>
    <property type="match status" value="1"/>
</dbReference>
<dbReference type="PANTHER" id="PTHR21299">
    <property type="entry name" value="CYTIDYLATE KINASE/PANTOATE-BETA-ALANINE LIGASE"/>
    <property type="match status" value="1"/>
</dbReference>
<dbReference type="PANTHER" id="PTHR21299:SF1">
    <property type="entry name" value="PANTOATE--BETA-ALANINE LIGASE"/>
    <property type="match status" value="1"/>
</dbReference>
<dbReference type="Pfam" id="PF02569">
    <property type="entry name" value="Pantoate_ligase"/>
    <property type="match status" value="1"/>
</dbReference>
<dbReference type="SUPFAM" id="SSF52374">
    <property type="entry name" value="Nucleotidylyl transferase"/>
    <property type="match status" value="1"/>
</dbReference>
<comment type="function">
    <text evidence="1">Catalyzes the condensation of pantoate with beta-alanine in an ATP-dependent reaction via a pantoyl-adenylate intermediate.</text>
</comment>
<comment type="catalytic activity">
    <reaction evidence="1">
        <text>(R)-pantoate + beta-alanine + ATP = (R)-pantothenate + AMP + diphosphate + H(+)</text>
        <dbReference type="Rhea" id="RHEA:10912"/>
        <dbReference type="ChEBI" id="CHEBI:15378"/>
        <dbReference type="ChEBI" id="CHEBI:15980"/>
        <dbReference type="ChEBI" id="CHEBI:29032"/>
        <dbReference type="ChEBI" id="CHEBI:30616"/>
        <dbReference type="ChEBI" id="CHEBI:33019"/>
        <dbReference type="ChEBI" id="CHEBI:57966"/>
        <dbReference type="ChEBI" id="CHEBI:456215"/>
        <dbReference type="EC" id="6.3.2.1"/>
    </reaction>
</comment>
<comment type="pathway">
    <text evidence="1">Cofactor biosynthesis; (R)-pantothenate biosynthesis; (R)-pantothenate from (R)-pantoate and beta-alanine: step 1/1.</text>
</comment>
<comment type="subunit">
    <text evidence="1">Homodimer.</text>
</comment>
<comment type="subcellular location">
    <subcellularLocation>
        <location evidence="1">Cytoplasm</location>
    </subcellularLocation>
</comment>
<comment type="miscellaneous">
    <text evidence="1">The reaction proceeds by a bi uni uni bi ping pong mechanism.</text>
</comment>
<comment type="similarity">
    <text evidence="1">Belongs to the pantothenate synthetase family.</text>
</comment>
<organism>
    <name type="scientific">Escherichia coli O157:H7 (strain EC4115 / EHEC)</name>
    <dbReference type="NCBI Taxonomy" id="444450"/>
    <lineage>
        <taxon>Bacteria</taxon>
        <taxon>Pseudomonadati</taxon>
        <taxon>Pseudomonadota</taxon>
        <taxon>Gammaproteobacteria</taxon>
        <taxon>Enterobacterales</taxon>
        <taxon>Enterobacteriaceae</taxon>
        <taxon>Escherichia</taxon>
    </lineage>
</organism>
<gene>
    <name evidence="1" type="primary">panC</name>
    <name type="ordered locus">ECH74115_0142</name>
</gene>
<accession>B5YZH0</accession>
<evidence type="ECO:0000255" key="1">
    <source>
        <dbReference type="HAMAP-Rule" id="MF_00158"/>
    </source>
</evidence>
<name>PANC_ECO5E</name>
<feature type="chain" id="PRO_1000097060" description="Pantothenate synthetase">
    <location>
        <begin position="1"/>
        <end position="283"/>
    </location>
</feature>
<feature type="active site" description="Proton donor" evidence="1">
    <location>
        <position position="37"/>
    </location>
</feature>
<feature type="binding site" evidence="1">
    <location>
        <begin position="30"/>
        <end position="37"/>
    </location>
    <ligand>
        <name>ATP</name>
        <dbReference type="ChEBI" id="CHEBI:30616"/>
    </ligand>
</feature>
<feature type="binding site" evidence="1">
    <location>
        <position position="61"/>
    </location>
    <ligand>
        <name>(R)-pantoate</name>
        <dbReference type="ChEBI" id="CHEBI:15980"/>
    </ligand>
</feature>
<feature type="binding site" evidence="1">
    <location>
        <position position="61"/>
    </location>
    <ligand>
        <name>beta-alanine</name>
        <dbReference type="ChEBI" id="CHEBI:57966"/>
    </ligand>
</feature>
<feature type="binding site" evidence="1">
    <location>
        <begin position="149"/>
        <end position="152"/>
    </location>
    <ligand>
        <name>ATP</name>
        <dbReference type="ChEBI" id="CHEBI:30616"/>
    </ligand>
</feature>
<feature type="binding site" evidence="1">
    <location>
        <position position="155"/>
    </location>
    <ligand>
        <name>(R)-pantoate</name>
        <dbReference type="ChEBI" id="CHEBI:15980"/>
    </ligand>
</feature>
<feature type="binding site" evidence="1">
    <location>
        <begin position="186"/>
        <end position="189"/>
    </location>
    <ligand>
        <name>ATP</name>
        <dbReference type="ChEBI" id="CHEBI:30616"/>
    </ligand>
</feature>
<proteinExistence type="inferred from homology"/>
<sequence length="283" mass="31568">MLIIETLPLLRQQIRRLRMEGKRVALVPTMGNLHDGHMKLVDEAKARADVVVVSIFVNPMQFDRPEDLARYPRTLQEDCEKLNKRKVDLVFAPSVKEIYPNGTETHTYVDVPGLSTMLEGASRPGHFRGVSTIVSKLFNLVQPDIACFGEKDFQQLALIRKMVADMGFDIEIVGVPIMRAKDGLALSSRNGYLTAEQRKIAPGLYKVLSSIADKLQAGERDLDEIIAIAGQELNEKGFRADDIQIRDADTLLEVSETSKRAVILVAAWLGDARLIDNKMVELA</sequence>
<keyword id="KW-0067">ATP-binding</keyword>
<keyword id="KW-0963">Cytoplasm</keyword>
<keyword id="KW-0436">Ligase</keyword>
<keyword id="KW-0547">Nucleotide-binding</keyword>
<keyword id="KW-0566">Pantothenate biosynthesis</keyword>
<protein>
    <recommendedName>
        <fullName evidence="1">Pantothenate synthetase</fullName>
        <shortName evidence="1">PS</shortName>
        <ecNumber evidence="1">6.3.2.1</ecNumber>
    </recommendedName>
    <alternativeName>
        <fullName evidence="1">Pantoate--beta-alanine ligase</fullName>
    </alternativeName>
    <alternativeName>
        <fullName evidence="1">Pantoate-activating enzyme</fullName>
    </alternativeName>
</protein>
<reference key="1">
    <citation type="journal article" date="2011" name="Proc. Natl. Acad. Sci. U.S.A.">
        <title>Genomic anatomy of Escherichia coli O157:H7 outbreaks.</title>
        <authorList>
            <person name="Eppinger M."/>
            <person name="Mammel M.K."/>
            <person name="Leclerc J.E."/>
            <person name="Ravel J."/>
            <person name="Cebula T.A."/>
        </authorList>
    </citation>
    <scope>NUCLEOTIDE SEQUENCE [LARGE SCALE GENOMIC DNA]</scope>
    <source>
        <strain>EC4115 / EHEC</strain>
    </source>
</reference>